<evidence type="ECO:0000250" key="1">
    <source>
        <dbReference type="UniProtKB" id="P9WK45"/>
    </source>
</evidence>
<evidence type="ECO:0000250" key="2">
    <source>
        <dbReference type="UniProtKB" id="P9WK47"/>
    </source>
</evidence>
<evidence type="ECO:0000255" key="3">
    <source>
        <dbReference type="PROSITE-ProRule" id="PRU00303"/>
    </source>
</evidence>
<evidence type="ECO:0000269" key="4">
    <source>
    </source>
</evidence>
<evidence type="ECO:0000303" key="5">
    <source>
    </source>
</evidence>
<evidence type="ECO:0000303" key="6">
    <source>
    </source>
</evidence>
<evidence type="ECO:0000305" key="7"/>
<proteinExistence type="inferred from homology"/>
<name>LPRG_MYCBO</name>
<protein>
    <recommendedName>
        <fullName evidence="1">Lipoarabinomannan carrier protein LprG</fullName>
    </recommendedName>
    <alternativeName>
        <fullName evidence="6">27 kDa lipoprotein</fullName>
    </alternativeName>
    <alternativeName>
        <fullName evidence="6">Antigen P27</fullName>
    </alternativeName>
    <alternativeName>
        <fullName>Lipoprotein LprG</fullName>
    </alternativeName>
    <alternativeName>
        <fullName>Triacylglyceride transfer protein LprG</fullName>
    </alternativeName>
</protein>
<sequence>MRTPRRHCRRIAVLAAVSIAATVVAGCSSGSKPSGGPLPDAKPLVEEATAQTKALKSAHMVLTVNGKIPGLSLKTLSGDLTTNPTAATGNVKLTLGGSDIDADFVVFDGILYATLTPNQWSDFGPAADIYDPAQVLNPDTGLANVLANFADAKAEGRDTINGQNTIRISGKVSAQAVNQIAPPFNATQPVPATVWIQETGDHQLAQAQLDRGSGNSVQMTLSKWGEKVQVTKPPVS</sequence>
<feature type="signal peptide" evidence="3">
    <location>
        <begin position="1"/>
        <end position="26"/>
    </location>
</feature>
<feature type="chain" id="PRO_0000018144" description="Lipoarabinomannan carrier protein LprG" evidence="3">
    <location>
        <begin position="27"/>
        <end position="236"/>
    </location>
</feature>
<feature type="lipid moiety-binding region" description="N-palmitoyl cysteine" evidence="3">
    <location>
        <position position="27"/>
    </location>
</feature>
<feature type="lipid moiety-binding region" description="S-diacylglycerol cysteine" evidence="3">
    <location>
        <position position="27"/>
    </location>
</feature>
<gene>
    <name evidence="5" type="primary">lprG</name>
    <name evidence="6" type="synonym">lpp-27</name>
    <name type="ordered locus">BQ2027_MB1446C</name>
</gene>
<comment type="function">
    <text evidence="1">Helps membrane protein Mb1445c (P55) transport triacylglycerides (TAG) across the inner cell membrane into the periplasm and probably ultimately to the outer membrane (By similarity). Binds TAG in its hydrophobic cavity and transfers it between lipid bilayers (By similarity). TAG probably regulates lipid metabolism and growth regulation and plays a structural role in the outer membrane (By similarity). Binds di- and triacylated phosphatidyl-myo-inositol mannosides (PIMs), and glycolipid lipoglycan modulins lipoarabinomannan (LAM) and lipomannan (LM), facilitating their recognition by TLR2. Required for activity of drug efflux transporter Mb1445c. Required, probably with Mb1445c, for normal surface localization of LAM.</text>
</comment>
<comment type="function">
    <text evidence="1">Constitutes a host TLR2 agonist (toll-like receptor).</text>
</comment>
<comment type="subcellular location">
    <subcellularLocation>
        <location evidence="3 4 7">Cell inner membrane</location>
        <topology evidence="3">Lipid-anchor</topology>
        <orientation evidence="7">Periplasmic side</orientation>
    </subcellularLocation>
    <subcellularLocation>
        <location evidence="1">Secreted</location>
        <location evidence="1">Cell wall</location>
    </subcellularLocation>
    <subcellularLocation>
        <location evidence="1">Secreted</location>
    </subcellularLocation>
</comment>
<comment type="domain">
    <text evidence="1">Forms a U-shaped beta-half-barrel with a small hydrophobic cavity able to hold a triacylated lipid or triacylglyceride (By similarity). A flexible lid region may move to accommodate different TAG molecules (By similarity).</text>
</comment>
<comment type="PTM">
    <text evidence="2">Modified by Lgt on Cys-27 with an S-linked diacylglyceral, signal peptide is removed by LspA, Cys-27 is further modifed with a fatty acid on its amino group by Lnt yielding a triacylated protein (By similarity).</text>
</comment>
<comment type="miscellaneous">
    <text evidence="7">Bacterial LAM blocks host cell phagosome-lysosome fusion and is one way in which Mycobacteria evade the host immune system.</text>
</comment>
<comment type="miscellaneous">
    <text evidence="7">Triacylglycerides accumulate in lipid droplets in the cytoplasm of M.tuberculosis stationary phase and dormant bacteria, and are used as an energy source during starvation.</text>
</comment>
<comment type="similarity">
    <text evidence="7">Belongs to the LppX/LprAFG lipoprotein family.</text>
</comment>
<keyword id="KW-0997">Cell inner membrane</keyword>
<keyword id="KW-1003">Cell membrane</keyword>
<keyword id="KW-0134">Cell wall</keyword>
<keyword id="KW-0445">Lipid transport</keyword>
<keyword id="KW-0446">Lipid-binding</keyword>
<keyword id="KW-0449">Lipoprotein</keyword>
<keyword id="KW-0472">Membrane</keyword>
<keyword id="KW-0564">Palmitate</keyword>
<keyword id="KW-1185">Reference proteome</keyword>
<keyword id="KW-0964">Secreted</keyword>
<keyword id="KW-0732">Signal</keyword>
<keyword id="KW-0813">Transport</keyword>
<accession>P0A5I9</accession>
<accession>A0A1R3XY92</accession>
<accession>O32852</accession>
<accession>P71679</accession>
<accession>X2BHT9</accession>
<organism>
    <name type="scientific">Mycobacterium bovis (strain ATCC BAA-935 / AF2122/97)</name>
    <dbReference type="NCBI Taxonomy" id="233413"/>
    <lineage>
        <taxon>Bacteria</taxon>
        <taxon>Bacillati</taxon>
        <taxon>Actinomycetota</taxon>
        <taxon>Actinomycetes</taxon>
        <taxon>Mycobacteriales</taxon>
        <taxon>Mycobacteriaceae</taxon>
        <taxon>Mycobacterium</taxon>
        <taxon>Mycobacterium tuberculosis complex</taxon>
    </lineage>
</organism>
<reference key="1">
    <citation type="journal article" date="1997" name="Microbiology">
        <title>A novel 27 kDa lipoprotein antigen from Mycobacterium bovis.</title>
        <authorList>
            <person name="Bigi F."/>
            <person name="Espitia C."/>
            <person name="Alito A.E."/>
            <person name="Zumarraga M."/>
            <person name="Romano M.I."/>
            <person name="Cravero S.A."/>
            <person name="Cataldi A."/>
        </authorList>
    </citation>
    <scope>NUCLEOTIDE SEQUENCE [GENOMIC DNA]</scope>
    <scope>SUBCELLULAR LOCATION</scope>
    <source>
        <strain>9598</strain>
    </source>
</reference>
<reference key="2">
    <citation type="journal article" date="2003" name="Proc. Natl. Acad. Sci. U.S.A.">
        <title>The complete genome sequence of Mycobacterium bovis.</title>
        <authorList>
            <person name="Garnier T."/>
            <person name="Eiglmeier K."/>
            <person name="Camus J.-C."/>
            <person name="Medina N."/>
            <person name="Mansoor H."/>
            <person name="Pryor M."/>
            <person name="Duthoy S."/>
            <person name="Grondin S."/>
            <person name="Lacroix C."/>
            <person name="Monsempe C."/>
            <person name="Simon S."/>
            <person name="Harris B."/>
            <person name="Atkin R."/>
            <person name="Doggett J."/>
            <person name="Mayes R."/>
            <person name="Keating L."/>
            <person name="Wheeler P.R."/>
            <person name="Parkhill J."/>
            <person name="Barrell B.G."/>
            <person name="Cole S.T."/>
            <person name="Gordon S.V."/>
            <person name="Hewinson R.G."/>
        </authorList>
    </citation>
    <scope>NUCLEOTIDE SEQUENCE [LARGE SCALE GENOMIC DNA]</scope>
    <source>
        <strain>ATCC BAA-935 / AF2122/97</strain>
    </source>
</reference>
<reference key="3">
    <citation type="journal article" date="2017" name="Genome Announc.">
        <title>Updated reference genome sequence and annotation of Mycobacterium bovis AF2122/97.</title>
        <authorList>
            <person name="Malone K.M."/>
            <person name="Farrell D."/>
            <person name="Stuber T.P."/>
            <person name="Schubert O.T."/>
            <person name="Aebersold R."/>
            <person name="Robbe-Austerman S."/>
            <person name="Gordon S.V."/>
        </authorList>
    </citation>
    <scope>NUCLEOTIDE SEQUENCE [LARGE SCALE GENOMIC DNA]</scope>
    <scope>GENOME REANNOTATION</scope>
    <source>
        <strain>ATCC BAA-935 / AF2122/97</strain>
    </source>
</reference>
<dbReference type="EMBL" id="AJ000500">
    <property type="protein sequence ID" value="CAA04135.1"/>
    <property type="molecule type" value="Genomic_DNA"/>
</dbReference>
<dbReference type="EMBL" id="LT708304">
    <property type="protein sequence ID" value="SIU00049.1"/>
    <property type="molecule type" value="Genomic_DNA"/>
</dbReference>
<dbReference type="RefSeq" id="NP_855098.1">
    <property type="nucleotide sequence ID" value="NC_002945.3"/>
</dbReference>
<dbReference type="RefSeq" id="WP_003407315.1">
    <property type="nucleotide sequence ID" value="NC_002945.4"/>
</dbReference>
<dbReference type="SMR" id="P0A5I9"/>
<dbReference type="KEGG" id="mbo:BQ2027_MB1446C"/>
<dbReference type="PATRIC" id="fig|233413.5.peg.1581"/>
<dbReference type="Proteomes" id="UP000001419">
    <property type="component" value="Chromosome"/>
</dbReference>
<dbReference type="GO" id="GO:0005576">
    <property type="term" value="C:extracellular region"/>
    <property type="evidence" value="ECO:0007669"/>
    <property type="project" value="UniProtKB-SubCell"/>
</dbReference>
<dbReference type="GO" id="GO:0005886">
    <property type="term" value="C:plasma membrane"/>
    <property type="evidence" value="ECO:0007669"/>
    <property type="project" value="UniProtKB-SubCell"/>
</dbReference>
<dbReference type="GO" id="GO:0008289">
    <property type="term" value="F:lipid binding"/>
    <property type="evidence" value="ECO:0007669"/>
    <property type="project" value="UniProtKB-KW"/>
</dbReference>
<dbReference type="GO" id="GO:0006869">
    <property type="term" value="P:lipid transport"/>
    <property type="evidence" value="ECO:0007669"/>
    <property type="project" value="UniProtKB-KW"/>
</dbReference>
<dbReference type="CDD" id="cd16334">
    <property type="entry name" value="LppX-like"/>
    <property type="match status" value="1"/>
</dbReference>
<dbReference type="FunFam" id="2.50.20.20:FF:000004">
    <property type="entry name" value="Lipoarabinomannan carrier protein LprG"/>
    <property type="match status" value="1"/>
</dbReference>
<dbReference type="Gene3D" id="2.50.20.20">
    <property type="match status" value="1"/>
</dbReference>
<dbReference type="InterPro" id="IPR029046">
    <property type="entry name" value="LolA/LolB/LppX"/>
</dbReference>
<dbReference type="InterPro" id="IPR009830">
    <property type="entry name" value="LppX/LprAFG"/>
</dbReference>
<dbReference type="Pfam" id="PF07161">
    <property type="entry name" value="LppX_LprAFG"/>
    <property type="match status" value="1"/>
</dbReference>
<dbReference type="SUPFAM" id="SSF89392">
    <property type="entry name" value="Prokaryotic lipoproteins and lipoprotein localization factors"/>
    <property type="match status" value="1"/>
</dbReference>
<dbReference type="PROSITE" id="PS51257">
    <property type="entry name" value="PROKAR_LIPOPROTEIN"/>
    <property type="match status" value="1"/>
</dbReference>